<dbReference type="EC" id="3.6.4.13"/>
<dbReference type="EMBL" id="FO080423">
    <property type="protein sequence ID" value="CCD63592.1"/>
    <property type="molecule type" value="Genomic_DNA"/>
</dbReference>
<dbReference type="RefSeq" id="NP_498646.1">
    <property type="nucleotide sequence ID" value="NM_066245.8"/>
</dbReference>
<dbReference type="PDB" id="7DTJ">
    <property type="method" value="X-ray"/>
    <property type="resolution" value="2.40 A"/>
    <property type="chains" value="A=247-420"/>
</dbReference>
<dbReference type="PDB" id="7DTK">
    <property type="method" value="X-ray"/>
    <property type="resolution" value="1.85 A"/>
    <property type="chains" value="A/B=20-248"/>
</dbReference>
<dbReference type="PDBsum" id="7DTJ"/>
<dbReference type="PDBsum" id="7DTK"/>
<dbReference type="SMR" id="Q95YF3"/>
<dbReference type="BioGRID" id="41269">
    <property type="interactions" value="55"/>
</dbReference>
<dbReference type="DIP" id="DIP-25457N"/>
<dbReference type="FunCoup" id="Q95YF3">
    <property type="interactions" value="3319"/>
</dbReference>
<dbReference type="IntAct" id="Q95YF3">
    <property type="interactions" value="23"/>
</dbReference>
<dbReference type="STRING" id="6239.C07H6.5.1"/>
<dbReference type="iPTMnet" id="Q95YF3"/>
<dbReference type="PaxDb" id="6239-C07H6.5"/>
<dbReference type="PeptideAtlas" id="Q95YF3"/>
<dbReference type="EnsemblMetazoa" id="C07H6.5.1">
    <property type="protein sequence ID" value="C07H6.5.1"/>
    <property type="gene ID" value="WBGene00000479"/>
</dbReference>
<dbReference type="GeneID" id="176061"/>
<dbReference type="KEGG" id="cel:CELE_C07H6.5"/>
<dbReference type="UCSC" id="C07H6.5.1">
    <property type="organism name" value="c. elegans"/>
</dbReference>
<dbReference type="AGR" id="WB:WBGene00000479"/>
<dbReference type="CTD" id="176061"/>
<dbReference type="WormBase" id="C07H6.5">
    <property type="protein sequence ID" value="CE00839"/>
    <property type="gene ID" value="WBGene00000479"/>
    <property type="gene designation" value="cgh-1"/>
</dbReference>
<dbReference type="eggNOG" id="KOG0326">
    <property type="taxonomic scope" value="Eukaryota"/>
</dbReference>
<dbReference type="GeneTree" id="ENSGT00940000170366"/>
<dbReference type="HOGENOM" id="CLU_003041_1_0_1"/>
<dbReference type="InParanoid" id="Q95YF3"/>
<dbReference type="OMA" id="TYEDRHT"/>
<dbReference type="OrthoDB" id="10265785at2759"/>
<dbReference type="PhylomeDB" id="Q95YF3"/>
<dbReference type="Reactome" id="R-CEL-430039">
    <property type="pathway name" value="mRNA decay by 5' to 3' exoribonuclease"/>
</dbReference>
<dbReference type="CD-CODE" id="73A75392">
    <property type="entry name" value="P-granule"/>
</dbReference>
<dbReference type="CD-CODE" id="D6EADA8A">
    <property type="entry name" value="RNP granule"/>
</dbReference>
<dbReference type="CD-CODE" id="EE0382A7">
    <property type="entry name" value="P-body"/>
</dbReference>
<dbReference type="PRO" id="PR:Q95YF3"/>
<dbReference type="Proteomes" id="UP000001940">
    <property type="component" value="Chromosome III"/>
</dbReference>
<dbReference type="Bgee" id="WBGene00000479">
    <property type="expression patterns" value="Expressed in adult organism and 8 other cell types or tissues"/>
</dbReference>
<dbReference type="GO" id="GO:0010494">
    <property type="term" value="C:cytoplasmic stress granule"/>
    <property type="evidence" value="ECO:0000314"/>
    <property type="project" value="WormBase"/>
</dbReference>
<dbReference type="GO" id="GO:0043229">
    <property type="term" value="C:intracellular organelle"/>
    <property type="evidence" value="ECO:0000314"/>
    <property type="project" value="WormBase"/>
</dbReference>
<dbReference type="GO" id="GO:0043186">
    <property type="term" value="C:P granule"/>
    <property type="evidence" value="ECO:0000314"/>
    <property type="project" value="WormBase"/>
</dbReference>
<dbReference type="GO" id="GO:0000932">
    <property type="term" value="C:P-body"/>
    <property type="evidence" value="ECO:0000314"/>
    <property type="project" value="WormBase"/>
</dbReference>
<dbReference type="GO" id="GO:1990904">
    <property type="term" value="C:ribonucleoprotein complex"/>
    <property type="evidence" value="ECO:0000314"/>
    <property type="project" value="WormBase"/>
</dbReference>
<dbReference type="GO" id="GO:0035770">
    <property type="term" value="C:ribonucleoprotein granule"/>
    <property type="evidence" value="ECO:0000314"/>
    <property type="project" value="WormBase"/>
</dbReference>
<dbReference type="GO" id="GO:0005524">
    <property type="term" value="F:ATP binding"/>
    <property type="evidence" value="ECO:0007669"/>
    <property type="project" value="UniProtKB-KW"/>
</dbReference>
<dbReference type="GO" id="GO:0016887">
    <property type="term" value="F:ATP hydrolysis activity"/>
    <property type="evidence" value="ECO:0007669"/>
    <property type="project" value="RHEA"/>
</dbReference>
<dbReference type="GO" id="GO:0003729">
    <property type="term" value="F:mRNA binding"/>
    <property type="evidence" value="ECO:0000318"/>
    <property type="project" value="GO_Central"/>
</dbReference>
<dbReference type="GO" id="GO:0003724">
    <property type="term" value="F:RNA helicase activity"/>
    <property type="evidence" value="ECO:0000250"/>
    <property type="project" value="WormBase"/>
</dbReference>
<dbReference type="GO" id="GO:0006915">
    <property type="term" value="P:apoptotic process"/>
    <property type="evidence" value="ECO:0007669"/>
    <property type="project" value="UniProtKB-KW"/>
</dbReference>
<dbReference type="GO" id="GO:0008340">
    <property type="term" value="P:determination of adult lifespan"/>
    <property type="evidence" value="ECO:0000315"/>
    <property type="project" value="WormBase"/>
</dbReference>
<dbReference type="GO" id="GO:0007276">
    <property type="term" value="P:gamete generation"/>
    <property type="evidence" value="ECO:0000315"/>
    <property type="project" value="WormBase"/>
</dbReference>
<dbReference type="GO" id="GO:0016071">
    <property type="term" value="P:mRNA metabolic process"/>
    <property type="evidence" value="ECO:0000315"/>
    <property type="project" value="WormBase"/>
</dbReference>
<dbReference type="GO" id="GO:0043066">
    <property type="term" value="P:negative regulation of apoptotic process"/>
    <property type="evidence" value="ECO:0000315"/>
    <property type="project" value="WormBase"/>
</dbReference>
<dbReference type="GO" id="GO:0017148">
    <property type="term" value="P:negative regulation of translation"/>
    <property type="evidence" value="ECO:0000315"/>
    <property type="project" value="WormBase"/>
</dbReference>
<dbReference type="GO" id="GO:0048477">
    <property type="term" value="P:oogenesis"/>
    <property type="evidence" value="ECO:0007669"/>
    <property type="project" value="UniProtKB-KW"/>
</dbReference>
<dbReference type="GO" id="GO:0033962">
    <property type="term" value="P:P-body assembly"/>
    <property type="evidence" value="ECO:0000315"/>
    <property type="project" value="WormBase"/>
</dbReference>
<dbReference type="GO" id="GO:0007283">
    <property type="term" value="P:spermatogenesis"/>
    <property type="evidence" value="ECO:0007669"/>
    <property type="project" value="UniProtKB-KW"/>
</dbReference>
<dbReference type="GO" id="GO:0034063">
    <property type="term" value="P:stress granule assembly"/>
    <property type="evidence" value="ECO:0000318"/>
    <property type="project" value="GO_Central"/>
</dbReference>
<dbReference type="CDD" id="cd17940">
    <property type="entry name" value="DEADc_DDX6"/>
    <property type="match status" value="1"/>
</dbReference>
<dbReference type="CDD" id="cd18787">
    <property type="entry name" value="SF2_C_DEAD"/>
    <property type="match status" value="1"/>
</dbReference>
<dbReference type="FunFam" id="3.40.50.300:FF:002542">
    <property type="entry name" value="ATP-dependent RNA helicase cgh-1"/>
    <property type="match status" value="1"/>
</dbReference>
<dbReference type="FunFam" id="3.40.50.300:FF:000114">
    <property type="entry name" value="ATP-dependent RNA helicase DDX6"/>
    <property type="match status" value="1"/>
</dbReference>
<dbReference type="Gene3D" id="3.40.50.300">
    <property type="entry name" value="P-loop containing nucleotide triphosphate hydrolases"/>
    <property type="match status" value="2"/>
</dbReference>
<dbReference type="InterPro" id="IPR011545">
    <property type="entry name" value="DEAD/DEAH_box_helicase_dom"/>
</dbReference>
<dbReference type="InterPro" id="IPR014001">
    <property type="entry name" value="Helicase_ATP-bd"/>
</dbReference>
<dbReference type="InterPro" id="IPR001650">
    <property type="entry name" value="Helicase_C-like"/>
</dbReference>
<dbReference type="InterPro" id="IPR027417">
    <property type="entry name" value="P-loop_NTPase"/>
</dbReference>
<dbReference type="InterPro" id="IPR000629">
    <property type="entry name" value="RNA-helicase_DEAD-box_CS"/>
</dbReference>
<dbReference type="InterPro" id="IPR014014">
    <property type="entry name" value="RNA_helicase_DEAD_Q_motif"/>
</dbReference>
<dbReference type="PANTHER" id="PTHR47960">
    <property type="entry name" value="DEAD-BOX ATP-DEPENDENT RNA HELICASE 50"/>
    <property type="match status" value="1"/>
</dbReference>
<dbReference type="Pfam" id="PF00270">
    <property type="entry name" value="DEAD"/>
    <property type="match status" value="1"/>
</dbReference>
<dbReference type="Pfam" id="PF00271">
    <property type="entry name" value="Helicase_C"/>
    <property type="match status" value="1"/>
</dbReference>
<dbReference type="SMART" id="SM00487">
    <property type="entry name" value="DEXDc"/>
    <property type="match status" value="1"/>
</dbReference>
<dbReference type="SMART" id="SM00490">
    <property type="entry name" value="HELICc"/>
    <property type="match status" value="1"/>
</dbReference>
<dbReference type="SUPFAM" id="SSF52540">
    <property type="entry name" value="P-loop containing nucleoside triphosphate hydrolases"/>
    <property type="match status" value="1"/>
</dbReference>
<dbReference type="PROSITE" id="PS00039">
    <property type="entry name" value="DEAD_ATP_HELICASE"/>
    <property type="match status" value="1"/>
</dbReference>
<dbReference type="PROSITE" id="PS51192">
    <property type="entry name" value="HELICASE_ATP_BIND_1"/>
    <property type="match status" value="1"/>
</dbReference>
<dbReference type="PROSITE" id="PS51194">
    <property type="entry name" value="HELICASE_CTER"/>
    <property type="match status" value="1"/>
</dbReference>
<dbReference type="PROSITE" id="PS51195">
    <property type="entry name" value="Q_MOTIF"/>
    <property type="match status" value="1"/>
</dbReference>
<gene>
    <name type="primary">cgh-1</name>
    <name type="ORF">C07H6.5</name>
</gene>
<feature type="chain" id="PRO_0000239936" description="ATP-dependent RNA helicase cgh-1">
    <location>
        <begin position="1"/>
        <end position="430"/>
    </location>
</feature>
<feature type="domain" description="Helicase ATP-binding" evidence="2">
    <location>
        <begin position="74"/>
        <end position="244"/>
    </location>
</feature>
<feature type="domain" description="Helicase C-terminal" evidence="3">
    <location>
        <begin position="254"/>
        <end position="414"/>
    </location>
</feature>
<feature type="short sequence motif" description="Q motif" evidence="1">
    <location>
        <begin position="43"/>
        <end position="71"/>
    </location>
</feature>
<feature type="short sequence motif" description="DEAD box" evidence="1">
    <location>
        <begin position="192"/>
        <end position="195"/>
    </location>
</feature>
<feature type="binding site" evidence="2">
    <location>
        <begin position="87"/>
        <end position="94"/>
    </location>
    <ligand>
        <name>ATP</name>
        <dbReference type="ChEBI" id="CHEBI:30616"/>
    </ligand>
</feature>
<feature type="helix" evidence="10">
    <location>
        <begin position="45"/>
        <end position="48"/>
    </location>
</feature>
<feature type="helix" evidence="10">
    <location>
        <begin position="52"/>
        <end position="60"/>
    </location>
</feature>
<feature type="helix" evidence="10">
    <location>
        <begin position="68"/>
        <end position="78"/>
    </location>
</feature>
<feature type="strand" evidence="10">
    <location>
        <begin position="83"/>
        <end position="86"/>
    </location>
</feature>
<feature type="strand" evidence="10">
    <location>
        <begin position="89"/>
        <end position="91"/>
    </location>
</feature>
<feature type="helix" evidence="10">
    <location>
        <begin position="92"/>
        <end position="103"/>
    </location>
</feature>
<feature type="strand" evidence="10">
    <location>
        <begin position="114"/>
        <end position="117"/>
    </location>
</feature>
<feature type="helix" evidence="10">
    <location>
        <begin position="121"/>
        <end position="134"/>
    </location>
</feature>
<feature type="turn" evidence="10">
    <location>
        <begin position="135"/>
        <end position="139"/>
    </location>
</feature>
<feature type="strand" evidence="10">
    <location>
        <begin position="142"/>
        <end position="145"/>
    </location>
</feature>
<feature type="strand" evidence="10">
    <location>
        <begin position="147"/>
        <end position="149"/>
    </location>
</feature>
<feature type="helix" evidence="10">
    <location>
        <begin position="151"/>
        <end position="159"/>
    </location>
</feature>
<feature type="strand" evidence="10">
    <location>
        <begin position="163"/>
        <end position="167"/>
    </location>
</feature>
<feature type="helix" evidence="10">
    <location>
        <begin position="169"/>
        <end position="177"/>
    </location>
</feature>
<feature type="strand" evidence="10">
    <location>
        <begin position="188"/>
        <end position="193"/>
    </location>
</feature>
<feature type="helix" evidence="10">
    <location>
        <begin position="194"/>
        <end position="197"/>
    </location>
</feature>
<feature type="helix" evidence="10">
    <location>
        <begin position="200"/>
        <end position="202"/>
    </location>
</feature>
<feature type="helix" evidence="10">
    <location>
        <begin position="205"/>
        <end position="210"/>
    </location>
</feature>
<feature type="strand" evidence="10">
    <location>
        <begin position="218"/>
        <end position="224"/>
    </location>
</feature>
<feature type="helix" evidence="10">
    <location>
        <begin position="228"/>
        <end position="237"/>
    </location>
</feature>
<feature type="strand" evidence="10">
    <location>
        <begin position="242"/>
        <end position="244"/>
    </location>
</feature>
<feature type="strand" evidence="9">
    <location>
        <begin position="249"/>
        <end position="251"/>
    </location>
</feature>
<feature type="strand" evidence="9">
    <location>
        <begin position="255"/>
        <end position="261"/>
    </location>
</feature>
<feature type="helix" evidence="9">
    <location>
        <begin position="264"/>
        <end position="266"/>
    </location>
</feature>
<feature type="helix" evidence="9">
    <location>
        <begin position="267"/>
        <end position="277"/>
    </location>
</feature>
<feature type="strand" evidence="9">
    <location>
        <begin position="281"/>
        <end position="286"/>
    </location>
</feature>
<feature type="helix" evidence="9">
    <location>
        <begin position="290"/>
        <end position="303"/>
    </location>
</feature>
<feature type="strand" evidence="9">
    <location>
        <begin position="307"/>
        <end position="310"/>
    </location>
</feature>
<feature type="helix" evidence="9">
    <location>
        <begin position="316"/>
        <end position="328"/>
    </location>
</feature>
<feature type="strand" evidence="9">
    <location>
        <begin position="332"/>
        <end position="336"/>
    </location>
</feature>
<feature type="strand" evidence="9">
    <location>
        <begin position="349"/>
        <end position="356"/>
    </location>
</feature>
<feature type="helix" evidence="9">
    <location>
        <begin position="361"/>
        <end position="368"/>
    </location>
</feature>
<feature type="strand" evidence="9">
    <location>
        <begin position="370"/>
        <end position="374"/>
    </location>
</feature>
<feature type="strand" evidence="9">
    <location>
        <begin position="378"/>
        <end position="384"/>
    </location>
</feature>
<feature type="helix" evidence="9">
    <location>
        <begin position="386"/>
        <end position="388"/>
    </location>
</feature>
<feature type="helix" evidence="9">
    <location>
        <begin position="389"/>
        <end position="398"/>
    </location>
</feature>
<feature type="strand" evidence="9">
    <location>
        <begin position="403"/>
        <end position="405"/>
    </location>
</feature>
<feature type="helix" evidence="9">
    <location>
        <begin position="412"/>
        <end position="414"/>
    </location>
</feature>
<keyword id="KW-0002">3D-structure</keyword>
<keyword id="KW-0053">Apoptosis</keyword>
<keyword id="KW-0067">ATP-binding</keyword>
<keyword id="KW-0963">Cytoplasm</keyword>
<keyword id="KW-0217">Developmental protein</keyword>
<keyword id="KW-0221">Differentiation</keyword>
<keyword id="KW-0903">Direct protein sequencing</keyword>
<keyword id="KW-0347">Helicase</keyword>
<keyword id="KW-0378">Hydrolase</keyword>
<keyword id="KW-0547">Nucleotide-binding</keyword>
<keyword id="KW-0896">Oogenesis</keyword>
<keyword id="KW-1185">Reference proteome</keyword>
<keyword id="KW-0694">RNA-binding</keyword>
<keyword id="KW-0744">Spermatogenesis</keyword>
<evidence type="ECO:0000255" key="1"/>
<evidence type="ECO:0000255" key="2">
    <source>
        <dbReference type="PROSITE-ProRule" id="PRU00541"/>
    </source>
</evidence>
<evidence type="ECO:0000255" key="3">
    <source>
        <dbReference type="PROSITE-ProRule" id="PRU00542"/>
    </source>
</evidence>
<evidence type="ECO:0000269" key="4">
    <source>
    </source>
</evidence>
<evidence type="ECO:0000269" key="5">
    <source>
    </source>
</evidence>
<evidence type="ECO:0000269" key="6">
    <source>
    </source>
</evidence>
<evidence type="ECO:0000269" key="7">
    <source>
    </source>
</evidence>
<evidence type="ECO:0000305" key="8"/>
<evidence type="ECO:0007829" key="9">
    <source>
        <dbReference type="PDB" id="7DTJ"/>
    </source>
</evidence>
<evidence type="ECO:0007829" key="10">
    <source>
        <dbReference type="PDB" id="7DTK"/>
    </source>
</evidence>
<name>CGH1_CAEEL</name>
<proteinExistence type="evidence at protein level"/>
<accession>Q95YF3</accession>
<sequence>MSGAEQQQIVPANNGDENWKAGLNLPAKDRRFKTADVTDTKGVEFEDFCLGRDLLMGIFEKGWEKPSPIQEASIGVALTGQDILARAKNGTGKTGAYCIPVIEKIQPALKAIQAMVIVPTRELALQTSQICVELSKHIQLKVMVTTGGTDLRDDIMRLNGTVHLVIATPGRILDLMEKGVAKMEHCKTLVLDEADKLLSQDFQGILDRLINFLPKERQVMLYSATFPNTVTSFMQKHMHKPYEINLMEELTLLGVTQYYAFVQEKQKVHCLNTLFRKLQINQSIIFCNSTQRVELLAKKITEIGYSCYYIHSKMAQNHRNRVFHDFRQGNCRNLVCSDLLTRGIDIQAVNVVINFDFPRNAETYLHRIGRSGRFGHLGVAINLITYEDRHTLRRIEQELRTRIEPIPKTVDPKLYVADQQLVDAADETTA</sequence>
<protein>
    <recommendedName>
        <fullName>ATP-dependent RNA helicase cgh-1</fullName>
        <ecNumber>3.6.4.13</ecNumber>
    </recommendedName>
    <alternativeName>
        <fullName>Conserved germline helicase 1</fullName>
    </alternativeName>
</protein>
<comment type="function">
    <text evidence="4 5">Probable RNA helicase required for oocyte and sperm function. Also required to prevent the physiological germline apoptosis mechanism killing essentially all developing oocytes.</text>
</comment>
<comment type="catalytic activity">
    <reaction>
        <text>ATP + H2O = ADP + phosphate + H(+)</text>
        <dbReference type="Rhea" id="RHEA:13065"/>
        <dbReference type="ChEBI" id="CHEBI:15377"/>
        <dbReference type="ChEBI" id="CHEBI:15378"/>
        <dbReference type="ChEBI" id="CHEBI:30616"/>
        <dbReference type="ChEBI" id="CHEBI:43474"/>
        <dbReference type="ChEBI" id="CHEBI:456216"/>
        <dbReference type="EC" id="3.6.4.13"/>
    </reaction>
</comment>
<comment type="subunit">
    <text evidence="5 6 7">Interacts with car-1 in a germline ribonucleoprotein complex (PubMed:16221731). Interacts with ifet-1 (PubMed:23264733). Interacts with oma-1, which is a component of a ribonucleoprotein complex, in an RNA-dependent manner (PubMed:25261697).</text>
</comment>
<comment type="interaction">
    <interactant intactId="EBI-314525">
        <id>Q95YF3</id>
    </interactant>
    <interactant intactId="EBI-314602">
        <id>Q21740</id>
        <label>edc-3</label>
    </interactant>
    <organismsDiffer>false</organismsDiffer>
    <experiments>5</experiments>
</comment>
<comment type="subcellular location">
    <subcellularLocation>
        <location evidence="4">Cytoplasm</location>
    </subcellularLocation>
    <text evidence="4 6">Cytoplasmic when associated with pgl-1. Associates with P granules and this localization is dependent on ifet-1.</text>
</comment>
<comment type="tissue specificity">
    <text evidence="4">Expression is restricted to two germline precursors Z2 and Z3 in L1 stage hermaphrodites, and is detectable specifically in the gonad at low levels into the L3 stage. Expression is significantly higher during the early L4 stage. In adults, expression remains gonad-specific and was not apparent in the somatically derived uterus. Expressed in germ granules (P granules); when associated with pgl-1.</text>
</comment>
<comment type="similarity">
    <text evidence="1">Belongs to the DEAD box helicase family. DDX6/DHH1 subfamily.</text>
</comment>
<organism>
    <name type="scientific">Caenorhabditis elegans</name>
    <dbReference type="NCBI Taxonomy" id="6239"/>
    <lineage>
        <taxon>Eukaryota</taxon>
        <taxon>Metazoa</taxon>
        <taxon>Ecdysozoa</taxon>
        <taxon>Nematoda</taxon>
        <taxon>Chromadorea</taxon>
        <taxon>Rhabditida</taxon>
        <taxon>Rhabditina</taxon>
        <taxon>Rhabditomorpha</taxon>
        <taxon>Rhabditoidea</taxon>
        <taxon>Rhabditidae</taxon>
        <taxon>Peloderinae</taxon>
        <taxon>Caenorhabditis</taxon>
    </lineage>
</organism>
<reference key="1">
    <citation type="journal article" date="1998" name="Science">
        <title>Genome sequence of the nematode C. elegans: a platform for investigating biology.</title>
        <authorList>
            <consortium name="The C. elegans sequencing consortium"/>
        </authorList>
    </citation>
    <scope>NUCLEOTIDE SEQUENCE [LARGE SCALE GENOMIC DNA]</scope>
    <source>
        <strain>Bristol N2</strain>
    </source>
</reference>
<reference key="2">
    <citation type="submission" date="2006-03" db="UniProtKB">
        <authorList>
            <person name="Bienvenut W.V."/>
        </authorList>
    </citation>
    <scope>PROTEIN SEQUENCE OF 21-28; 34-61; 111-121; 158-178; 188-215 AND 333-342</scope>
    <scope>IDENTIFICATION BY MASS SPECTROMETRY</scope>
</reference>
<reference evidence="8" key="3">
    <citation type="journal article" date="2001" name="Development">
        <title>cgh-1, a conserved predicted RNA helicase required for gametogenesis and protection from physiological germline apoptosis in C. elegans.</title>
        <authorList>
            <person name="Navarro R.E."/>
            <person name="Shim E.Y."/>
            <person name="Kohara Y."/>
            <person name="Singson A."/>
            <person name="Blackwell T.K."/>
        </authorList>
    </citation>
    <scope>FUNCTION</scope>
    <scope>SUBCELLULAR LOCATION</scope>
    <scope>TISSUE SPECIFICITY</scope>
</reference>
<reference evidence="8" key="4">
    <citation type="journal article" date="2005" name="Development">
        <title>A conserved RNA-protein complex component involved in physiological germline apoptosis regulation in C. elegans.</title>
        <authorList>
            <person name="Boag P.R."/>
            <person name="Nakamura A."/>
            <person name="Blackwell T.K."/>
        </authorList>
    </citation>
    <scope>FUNCTION</scope>
    <scope>INTERACTION WITH CAR-1</scope>
</reference>
<reference key="5">
    <citation type="journal article" date="2013" name="J. Cell Sci.">
        <title>ifet-1 is a broad-scale translational repressor required for normal P granule formation in C. elegans.</title>
        <authorList>
            <person name="Sengupta M.S."/>
            <person name="Low W.Y."/>
            <person name="Patterson J.R."/>
            <person name="Kim H.M."/>
            <person name="Traven A."/>
            <person name="Beilharz T.H."/>
            <person name="Colaiacovo M.P."/>
            <person name="Schisa J.A."/>
            <person name="Boag P.R."/>
        </authorList>
    </citation>
    <scope>INTERACTION WITH IFET-1</scope>
    <scope>SUBCELLULAR LOCATION</scope>
</reference>
<reference key="6">
    <citation type="journal article" date="2014" name="Genetics">
        <title>Translational control of the oogenic program by components of OMA ribonucleoprotein particles in Caenorhabditis elegans.</title>
        <authorList>
            <person name="Spike C.A."/>
            <person name="Coetzee D."/>
            <person name="Nishi Y."/>
            <person name="Guven-Ozkan T."/>
            <person name="Oldenbroek M."/>
            <person name="Yamamoto I."/>
            <person name="Lin R."/>
            <person name="Greenstein D."/>
        </authorList>
    </citation>
    <scope>INTERACTION WITH OMA-1</scope>
</reference>